<accession>Q1RHD0</accession>
<evidence type="ECO:0000255" key="1">
    <source>
        <dbReference type="HAMAP-Rule" id="MF_01321"/>
    </source>
</evidence>
<dbReference type="EC" id="2.7.7.6" evidence="1"/>
<dbReference type="EMBL" id="CP000087">
    <property type="protein sequence ID" value="ABE05234.1"/>
    <property type="molecule type" value="Genomic_DNA"/>
</dbReference>
<dbReference type="RefSeq" id="WP_011477812.1">
    <property type="nucleotide sequence ID" value="NC_007940.1"/>
</dbReference>
<dbReference type="SMR" id="Q1RHD0"/>
<dbReference type="KEGG" id="rbe:RBE_1153"/>
<dbReference type="eggNOG" id="COG0085">
    <property type="taxonomic scope" value="Bacteria"/>
</dbReference>
<dbReference type="HOGENOM" id="CLU_000524_4_0_5"/>
<dbReference type="OrthoDB" id="9803954at2"/>
<dbReference type="Proteomes" id="UP000001951">
    <property type="component" value="Chromosome"/>
</dbReference>
<dbReference type="GO" id="GO:0000428">
    <property type="term" value="C:DNA-directed RNA polymerase complex"/>
    <property type="evidence" value="ECO:0007669"/>
    <property type="project" value="UniProtKB-KW"/>
</dbReference>
<dbReference type="GO" id="GO:0003677">
    <property type="term" value="F:DNA binding"/>
    <property type="evidence" value="ECO:0007669"/>
    <property type="project" value="UniProtKB-UniRule"/>
</dbReference>
<dbReference type="GO" id="GO:0003899">
    <property type="term" value="F:DNA-directed RNA polymerase activity"/>
    <property type="evidence" value="ECO:0007669"/>
    <property type="project" value="UniProtKB-UniRule"/>
</dbReference>
<dbReference type="GO" id="GO:0032549">
    <property type="term" value="F:ribonucleoside binding"/>
    <property type="evidence" value="ECO:0007669"/>
    <property type="project" value="InterPro"/>
</dbReference>
<dbReference type="GO" id="GO:0006351">
    <property type="term" value="P:DNA-templated transcription"/>
    <property type="evidence" value="ECO:0007669"/>
    <property type="project" value="UniProtKB-UniRule"/>
</dbReference>
<dbReference type="CDD" id="cd00653">
    <property type="entry name" value="RNA_pol_B_RPB2"/>
    <property type="match status" value="1"/>
</dbReference>
<dbReference type="FunFam" id="3.90.1800.10:FF:000001">
    <property type="entry name" value="DNA-directed RNA polymerase subunit beta"/>
    <property type="match status" value="1"/>
</dbReference>
<dbReference type="Gene3D" id="2.40.50.100">
    <property type="match status" value="1"/>
</dbReference>
<dbReference type="Gene3D" id="2.40.50.150">
    <property type="match status" value="1"/>
</dbReference>
<dbReference type="Gene3D" id="3.90.1100.10">
    <property type="match status" value="2"/>
</dbReference>
<dbReference type="Gene3D" id="2.30.150.10">
    <property type="entry name" value="DNA-directed RNA polymerase, beta subunit, external 1 domain"/>
    <property type="match status" value="1"/>
</dbReference>
<dbReference type="Gene3D" id="2.40.270.10">
    <property type="entry name" value="DNA-directed RNA polymerase, subunit 2, domain 6"/>
    <property type="match status" value="2"/>
</dbReference>
<dbReference type="Gene3D" id="3.90.1800.10">
    <property type="entry name" value="RNA polymerase alpha subunit dimerisation domain"/>
    <property type="match status" value="1"/>
</dbReference>
<dbReference type="Gene3D" id="3.90.1110.10">
    <property type="entry name" value="RNA polymerase Rpb2, domain 2"/>
    <property type="match status" value="2"/>
</dbReference>
<dbReference type="HAMAP" id="MF_01321">
    <property type="entry name" value="RNApol_bact_RpoB"/>
    <property type="match status" value="1"/>
</dbReference>
<dbReference type="InterPro" id="IPR042107">
    <property type="entry name" value="DNA-dir_RNA_pol_bsu_ext_1_sf"/>
</dbReference>
<dbReference type="InterPro" id="IPR019462">
    <property type="entry name" value="DNA-dir_RNA_pol_bsu_external_1"/>
</dbReference>
<dbReference type="InterPro" id="IPR015712">
    <property type="entry name" value="DNA-dir_RNA_pol_su2"/>
</dbReference>
<dbReference type="InterPro" id="IPR007120">
    <property type="entry name" value="DNA-dir_RNAP_su2_dom"/>
</dbReference>
<dbReference type="InterPro" id="IPR037033">
    <property type="entry name" value="DNA-dir_RNAP_su2_hyb_sf"/>
</dbReference>
<dbReference type="InterPro" id="IPR010243">
    <property type="entry name" value="RNA_pol_bsu_bac"/>
</dbReference>
<dbReference type="InterPro" id="IPR007121">
    <property type="entry name" value="RNA_pol_bsu_CS"/>
</dbReference>
<dbReference type="InterPro" id="IPR007644">
    <property type="entry name" value="RNA_pol_bsu_protrusion"/>
</dbReference>
<dbReference type="InterPro" id="IPR007642">
    <property type="entry name" value="RNA_pol_Rpb2_2"/>
</dbReference>
<dbReference type="InterPro" id="IPR037034">
    <property type="entry name" value="RNA_pol_Rpb2_2_sf"/>
</dbReference>
<dbReference type="InterPro" id="IPR007645">
    <property type="entry name" value="RNA_pol_Rpb2_3"/>
</dbReference>
<dbReference type="InterPro" id="IPR007641">
    <property type="entry name" value="RNA_pol_Rpb2_7"/>
</dbReference>
<dbReference type="InterPro" id="IPR014724">
    <property type="entry name" value="RNA_pol_RPB2_OB-fold"/>
</dbReference>
<dbReference type="NCBIfam" id="NF001616">
    <property type="entry name" value="PRK00405.1"/>
    <property type="match status" value="1"/>
</dbReference>
<dbReference type="NCBIfam" id="TIGR02013">
    <property type="entry name" value="rpoB"/>
    <property type="match status" value="1"/>
</dbReference>
<dbReference type="PANTHER" id="PTHR20856">
    <property type="entry name" value="DNA-DIRECTED RNA POLYMERASE I SUBUNIT 2"/>
    <property type="match status" value="1"/>
</dbReference>
<dbReference type="Pfam" id="PF04563">
    <property type="entry name" value="RNA_pol_Rpb2_1"/>
    <property type="match status" value="1"/>
</dbReference>
<dbReference type="Pfam" id="PF04561">
    <property type="entry name" value="RNA_pol_Rpb2_2"/>
    <property type="match status" value="2"/>
</dbReference>
<dbReference type="Pfam" id="PF04565">
    <property type="entry name" value="RNA_pol_Rpb2_3"/>
    <property type="match status" value="1"/>
</dbReference>
<dbReference type="Pfam" id="PF10385">
    <property type="entry name" value="RNA_pol_Rpb2_45"/>
    <property type="match status" value="1"/>
</dbReference>
<dbReference type="Pfam" id="PF00562">
    <property type="entry name" value="RNA_pol_Rpb2_6"/>
    <property type="match status" value="1"/>
</dbReference>
<dbReference type="Pfam" id="PF04560">
    <property type="entry name" value="RNA_pol_Rpb2_7"/>
    <property type="match status" value="1"/>
</dbReference>
<dbReference type="SUPFAM" id="SSF64484">
    <property type="entry name" value="beta and beta-prime subunits of DNA dependent RNA-polymerase"/>
    <property type="match status" value="1"/>
</dbReference>
<dbReference type="PROSITE" id="PS01166">
    <property type="entry name" value="RNA_POL_BETA"/>
    <property type="match status" value="1"/>
</dbReference>
<gene>
    <name evidence="1" type="primary">rpoB</name>
    <name type="ordered locus">RBE_1153</name>
</gene>
<name>RPOB_RICBR</name>
<organism>
    <name type="scientific">Rickettsia bellii (strain RML369-C)</name>
    <dbReference type="NCBI Taxonomy" id="336407"/>
    <lineage>
        <taxon>Bacteria</taxon>
        <taxon>Pseudomonadati</taxon>
        <taxon>Pseudomonadota</taxon>
        <taxon>Alphaproteobacteria</taxon>
        <taxon>Rickettsiales</taxon>
        <taxon>Rickettsiaceae</taxon>
        <taxon>Rickettsieae</taxon>
        <taxon>Rickettsia</taxon>
        <taxon>belli group</taxon>
    </lineage>
</organism>
<comment type="function">
    <text evidence="1">DNA-dependent RNA polymerase catalyzes the transcription of DNA into RNA using the four ribonucleoside triphosphates as substrates.</text>
</comment>
<comment type="catalytic activity">
    <reaction evidence="1">
        <text>RNA(n) + a ribonucleoside 5'-triphosphate = RNA(n+1) + diphosphate</text>
        <dbReference type="Rhea" id="RHEA:21248"/>
        <dbReference type="Rhea" id="RHEA-COMP:14527"/>
        <dbReference type="Rhea" id="RHEA-COMP:17342"/>
        <dbReference type="ChEBI" id="CHEBI:33019"/>
        <dbReference type="ChEBI" id="CHEBI:61557"/>
        <dbReference type="ChEBI" id="CHEBI:140395"/>
        <dbReference type="EC" id="2.7.7.6"/>
    </reaction>
</comment>
<comment type="subunit">
    <text evidence="1">The RNAP catalytic core consists of 2 alpha, 1 beta, 1 beta' and 1 omega subunit. When a sigma factor is associated with the core the holoenzyme is formed, which can initiate transcription.</text>
</comment>
<comment type="similarity">
    <text evidence="1">Belongs to the RNA polymerase beta chain family.</text>
</comment>
<sequence>MVSLRDNIEVQPLSHNKRVRKNFGHINLVADIPNLIEIQKNSYEKNFLQLDTKDSERKNKGLQSILNSIFPISDPSNIANLEFVKYEFDTPKYDVEECTQRSLSYDSALKVTLRLSIWDIDEDTGSREIKGIKEQQVYMGNIPLMTKNGTFIINGTERVVVSQMHRSPGVFFYHDEGKVHSSRKLLYSARVIPYRGSWLDLEFDAKDIIYFRIDRKRKLYATTLLKAIGMSTEEIIKFYYDSVNYKVVKNKGWAVKFMPSHITAHRLTSDLIDADTGNVLLKAGQKITPRLAKKYAGEGLNNILVSHKALIGKYLSEDLKDPESDEILAKIGEMITVELLSVISDLKIKNISVLVINPQSGPYIRNTLFSDKNQDRESALFDIFRVLRPGEPANIEAAESLFYNLFFDPERYDLSEVGRIKMNSRLELNISDETTVLTTDDIKNILRVLVELKDRKGIIDDIDHLGNRRVRSVGELIENQFRIGLVRMEKSVVERMSAGDIDTVMPHDLVNSKILVSVVKEFFSTSQLSQFMDQTNPLSEITHKRRLSALGPGGLSRDRAGFEVRDVHPTHYGRICPIETPEGQNIGLINSMATYARINKHGFIESPYRKVKDGHVTDEVVYLSAIEEGKYKIGQANSKVDKDGILQGEFINCRVEGGNFVMVEPHEVDFIDVTPMQVVSVAASLIPFLENDDANRALMGSNMQRQAVPLIKTDAPFVGTGVEGVVAKDSGASVLALNDGIVEQVDSNRIVIRAIAQKTESAPSVDIYNLLKFQKSNHNTCINQKPLVKVGHYVKKNDIIADGPSTDNGEIALGRNVLVAFLPWNGYNFEDSILISERIVKEDVFTSVHIEEFEVIARDTRLGPEEITRDIPNVSEEALRHLDEVGIIYVGAEVKAGDILVGKVTPKSESPITPEEKLLRAIFGEKAFDVKDSSLHVPSGVSGTVVEVRVFSRRGVEKDQRAIAIEKQQIEKLAKDRDDELEIIEHFVFSWLEKLLVGQVSINGPKTVKTGQTITSEILKGLSKGQLWQFTVEDANVMNEIEQLKGHYDGKKEALNKRFATKVEKLQSGDDLPQGALKVVKVFIATKHKLQPGDKMAGRHGNKGVISRIVPEEDMPFLEDGTVVDIVLNPLGLPSRMNIGQVLETHLGWASVNLAKKIAGLVEEHKTKHASIEKIKKFLIELYGENINHILEKSDEEIISFCNEAAKGVYFATPVFDGAKVEDVKDMLRLAGQDLSGQVKLIDGRTGEYFDRLVTVGQKYLLKLHHLVDNKIHSRSIGPYSLVTQQPLGGKSHFGGQRFGEMECWALQAYGAAYTLQEMLTVKSDDVNGRIKIYDSIVRGENNFESGIPESFNVMIKEFRSLCLNVKLEVTS</sequence>
<protein>
    <recommendedName>
        <fullName evidence="1">DNA-directed RNA polymerase subunit beta</fullName>
        <shortName evidence="1">RNAP subunit beta</shortName>
        <ecNumber evidence="1">2.7.7.6</ecNumber>
    </recommendedName>
    <alternativeName>
        <fullName evidence="1">RNA polymerase subunit beta</fullName>
    </alternativeName>
    <alternativeName>
        <fullName evidence="1">Transcriptase subunit beta</fullName>
    </alternativeName>
</protein>
<reference key="1">
    <citation type="journal article" date="2006" name="PLoS Genet.">
        <title>Genome sequence of Rickettsia bellii illuminates the role of amoebae in gene exchanges between intracellular pathogens.</title>
        <authorList>
            <person name="Ogata H."/>
            <person name="La Scola B."/>
            <person name="Audic S."/>
            <person name="Renesto P."/>
            <person name="Blanc G."/>
            <person name="Robert C."/>
            <person name="Fournier P.-E."/>
            <person name="Claverie J.-M."/>
            <person name="Raoult D."/>
        </authorList>
    </citation>
    <scope>NUCLEOTIDE SEQUENCE [LARGE SCALE GENOMIC DNA]</scope>
    <source>
        <strain>RML369-C</strain>
    </source>
</reference>
<proteinExistence type="inferred from homology"/>
<keyword id="KW-0240">DNA-directed RNA polymerase</keyword>
<keyword id="KW-0548">Nucleotidyltransferase</keyword>
<keyword id="KW-0804">Transcription</keyword>
<keyword id="KW-0808">Transferase</keyword>
<feature type="chain" id="PRO_0000272393" description="DNA-directed RNA polymerase subunit beta">
    <location>
        <begin position="1"/>
        <end position="1372"/>
    </location>
</feature>